<reference key="1">
    <citation type="journal article" date="1992" name="Cell">
        <title>Nopp140 shuttles on tracks between nucleolus and cytoplasm.</title>
        <authorList>
            <person name="Meier U.T."/>
            <person name="Blobel G."/>
        </authorList>
    </citation>
    <scope>NUCLEOTIDE SEQUENCE [MRNA]</scope>
    <scope>PROTEIN SEQUENCE OF 292-309 AND 563-601</scope>
    <scope>SUBCELLULAR LOCATION</scope>
    <scope>PHOSPHORYLATION</scope>
    <source>
        <tissue>Liver</tissue>
    </source>
</reference>
<reference key="2">
    <citation type="journal article" date="2004" name="Nature">
        <title>Genome sequence of the Brown Norway rat yields insights into mammalian evolution.</title>
        <authorList>
            <person name="Gibbs R.A."/>
            <person name="Weinstock G.M."/>
            <person name="Metzker M.L."/>
            <person name="Muzny D.M."/>
            <person name="Sodergren E.J."/>
            <person name="Scherer S."/>
            <person name="Scott G."/>
            <person name="Steffen D."/>
            <person name="Worley K.C."/>
            <person name="Burch P.E."/>
            <person name="Okwuonu G."/>
            <person name="Hines S."/>
            <person name="Lewis L."/>
            <person name="Deramo C."/>
            <person name="Delgado O."/>
            <person name="Dugan-Rocha S."/>
            <person name="Miner G."/>
            <person name="Morgan M."/>
            <person name="Hawes A."/>
            <person name="Gill R."/>
            <person name="Holt R.A."/>
            <person name="Adams M.D."/>
            <person name="Amanatides P.G."/>
            <person name="Baden-Tillson H."/>
            <person name="Barnstead M."/>
            <person name="Chin S."/>
            <person name="Evans C.A."/>
            <person name="Ferriera S."/>
            <person name="Fosler C."/>
            <person name="Glodek A."/>
            <person name="Gu Z."/>
            <person name="Jennings D."/>
            <person name="Kraft C.L."/>
            <person name="Nguyen T."/>
            <person name="Pfannkoch C.M."/>
            <person name="Sitter C."/>
            <person name="Sutton G.G."/>
            <person name="Venter J.C."/>
            <person name="Woodage T."/>
            <person name="Smith D."/>
            <person name="Lee H.-M."/>
            <person name="Gustafson E."/>
            <person name="Cahill P."/>
            <person name="Kana A."/>
            <person name="Doucette-Stamm L."/>
            <person name="Weinstock K."/>
            <person name="Fechtel K."/>
            <person name="Weiss R.B."/>
            <person name="Dunn D.M."/>
            <person name="Green E.D."/>
            <person name="Blakesley R.W."/>
            <person name="Bouffard G.G."/>
            <person name="De Jong P.J."/>
            <person name="Osoegawa K."/>
            <person name="Zhu B."/>
            <person name="Marra M."/>
            <person name="Schein J."/>
            <person name="Bosdet I."/>
            <person name="Fjell C."/>
            <person name="Jones S."/>
            <person name="Krzywinski M."/>
            <person name="Mathewson C."/>
            <person name="Siddiqui A."/>
            <person name="Wye N."/>
            <person name="McPherson J."/>
            <person name="Zhao S."/>
            <person name="Fraser C.M."/>
            <person name="Shetty J."/>
            <person name="Shatsman S."/>
            <person name="Geer K."/>
            <person name="Chen Y."/>
            <person name="Abramzon S."/>
            <person name="Nierman W.C."/>
            <person name="Havlak P.H."/>
            <person name="Chen R."/>
            <person name="Durbin K.J."/>
            <person name="Egan A."/>
            <person name="Ren Y."/>
            <person name="Song X.-Z."/>
            <person name="Li B."/>
            <person name="Liu Y."/>
            <person name="Qin X."/>
            <person name="Cawley S."/>
            <person name="Cooney A.J."/>
            <person name="D'Souza L.M."/>
            <person name="Martin K."/>
            <person name="Wu J.Q."/>
            <person name="Gonzalez-Garay M.L."/>
            <person name="Jackson A.R."/>
            <person name="Kalafus K.J."/>
            <person name="McLeod M.P."/>
            <person name="Milosavljevic A."/>
            <person name="Virk D."/>
            <person name="Volkov A."/>
            <person name="Wheeler D.A."/>
            <person name="Zhang Z."/>
            <person name="Bailey J.A."/>
            <person name="Eichler E.E."/>
            <person name="Tuzun E."/>
            <person name="Birney E."/>
            <person name="Mongin E."/>
            <person name="Ureta-Vidal A."/>
            <person name="Woodwark C."/>
            <person name="Zdobnov E."/>
            <person name="Bork P."/>
            <person name="Suyama M."/>
            <person name="Torrents D."/>
            <person name="Alexandersson M."/>
            <person name="Trask B.J."/>
            <person name="Young J.M."/>
            <person name="Huang H."/>
            <person name="Wang H."/>
            <person name="Xing H."/>
            <person name="Daniels S."/>
            <person name="Gietzen D."/>
            <person name="Schmidt J."/>
            <person name="Stevens K."/>
            <person name="Vitt U."/>
            <person name="Wingrove J."/>
            <person name="Camara F."/>
            <person name="Mar Alba M."/>
            <person name="Abril J.F."/>
            <person name="Guigo R."/>
            <person name="Smit A."/>
            <person name="Dubchak I."/>
            <person name="Rubin E.M."/>
            <person name="Couronne O."/>
            <person name="Poliakov A."/>
            <person name="Huebner N."/>
            <person name="Ganten D."/>
            <person name="Goesele C."/>
            <person name="Hummel O."/>
            <person name="Kreitler T."/>
            <person name="Lee Y.-A."/>
            <person name="Monti J."/>
            <person name="Schulz H."/>
            <person name="Zimdahl H."/>
            <person name="Himmelbauer H."/>
            <person name="Lehrach H."/>
            <person name="Jacob H.J."/>
            <person name="Bromberg S."/>
            <person name="Gullings-Handley J."/>
            <person name="Jensen-Seaman M.I."/>
            <person name="Kwitek A.E."/>
            <person name="Lazar J."/>
            <person name="Pasko D."/>
            <person name="Tonellato P.J."/>
            <person name="Twigger S."/>
            <person name="Ponting C.P."/>
            <person name="Duarte J.M."/>
            <person name="Rice S."/>
            <person name="Goodstadt L."/>
            <person name="Beatson S.A."/>
            <person name="Emes R.D."/>
            <person name="Winter E.E."/>
            <person name="Webber C."/>
            <person name="Brandt P."/>
            <person name="Nyakatura G."/>
            <person name="Adetobi M."/>
            <person name="Chiaromonte F."/>
            <person name="Elnitski L."/>
            <person name="Eswara P."/>
            <person name="Hardison R.C."/>
            <person name="Hou M."/>
            <person name="Kolbe D."/>
            <person name="Makova K."/>
            <person name="Miller W."/>
            <person name="Nekrutenko A."/>
            <person name="Riemer C."/>
            <person name="Schwartz S."/>
            <person name="Taylor J."/>
            <person name="Yang S."/>
            <person name="Zhang Y."/>
            <person name="Lindpaintner K."/>
            <person name="Andrews T.D."/>
            <person name="Caccamo M."/>
            <person name="Clamp M."/>
            <person name="Clarke L."/>
            <person name="Curwen V."/>
            <person name="Durbin R.M."/>
            <person name="Eyras E."/>
            <person name="Searle S.M."/>
            <person name="Cooper G.M."/>
            <person name="Batzoglou S."/>
            <person name="Brudno M."/>
            <person name="Sidow A."/>
            <person name="Stone E.A."/>
            <person name="Payseur B.A."/>
            <person name="Bourque G."/>
            <person name="Lopez-Otin C."/>
            <person name="Puente X.S."/>
            <person name="Chakrabarti K."/>
            <person name="Chatterji S."/>
            <person name="Dewey C."/>
            <person name="Pachter L."/>
            <person name="Bray N."/>
            <person name="Yap V.B."/>
            <person name="Caspi A."/>
            <person name="Tesler G."/>
            <person name="Pevzner P.A."/>
            <person name="Haussler D."/>
            <person name="Roskin K.M."/>
            <person name="Baertsch R."/>
            <person name="Clawson H."/>
            <person name="Furey T.S."/>
            <person name="Hinrichs A.S."/>
            <person name="Karolchik D."/>
            <person name="Kent W.J."/>
            <person name="Rosenbloom K.R."/>
            <person name="Trumbower H."/>
            <person name="Weirauch M."/>
            <person name="Cooper D.N."/>
            <person name="Stenson P.D."/>
            <person name="Ma B."/>
            <person name="Brent M."/>
            <person name="Arumugam M."/>
            <person name="Shteynberg D."/>
            <person name="Copley R.R."/>
            <person name="Taylor M.S."/>
            <person name="Riethman H."/>
            <person name="Mudunuri U."/>
            <person name="Peterson J."/>
            <person name="Guyer M."/>
            <person name="Felsenfeld A."/>
            <person name="Old S."/>
            <person name="Mockrin S."/>
            <person name="Collins F.S."/>
        </authorList>
    </citation>
    <scope>NUCLEOTIDE SEQUENCE [LARGE SCALE GENOMIC DNA]</scope>
    <scope>IDENTIFICATION</scope>
    <source>
        <strain>Brown Norway</strain>
    </source>
</reference>
<reference key="3">
    <citation type="journal article" date="2000" name="Mol. Biol. Cell">
        <title>Conserved composition of mammalian box H/ACA and box C/D small nucleolar ribonucleoprotein particles and their interaction with the common factor Nopp140.</title>
        <authorList>
            <person name="Yang Y."/>
            <person name="Isaac C."/>
            <person name="Wang C."/>
            <person name="Dragon F."/>
            <person name="Pogacic V."/>
            <person name="Meier U.T."/>
        </authorList>
    </citation>
    <scope>INTERACTION WITH NOP58</scope>
    <scope>FIBRILLARIN</scope>
</reference>
<reference key="4">
    <citation type="journal article" date="2012" name="Nat. Commun.">
        <title>Quantitative maps of protein phosphorylation sites across 14 different rat organs and tissues.</title>
        <authorList>
            <person name="Lundby A."/>
            <person name="Secher A."/>
            <person name="Lage K."/>
            <person name="Nordsborg N.B."/>
            <person name="Dmytriyev A."/>
            <person name="Lundby C."/>
            <person name="Olsen J.V."/>
        </authorList>
    </citation>
    <scope>PHOSPHORYLATION [LARGE SCALE ANALYSIS] AT SER-567 AND SER-703</scope>
    <scope>IDENTIFICATION BY MASS SPECTROMETRY [LARGE SCALE ANALYSIS]</scope>
</reference>
<name>NOLC1_RAT</name>
<dbReference type="EMBL" id="M94287">
    <property type="protein sequence ID" value="AAA41718.1"/>
    <property type="molecule type" value="mRNA"/>
</dbReference>
<dbReference type="EMBL" id="M94288">
    <property type="protein sequence ID" value="AAA41719.1"/>
    <property type="molecule type" value="mRNA"/>
</dbReference>
<dbReference type="EMBL" id="AC119478">
    <property type="status" value="NOT_ANNOTATED_CDS"/>
    <property type="molecule type" value="Genomic_DNA"/>
</dbReference>
<dbReference type="PIR" id="B42680">
    <property type="entry name" value="B42680"/>
</dbReference>
<dbReference type="RefSeq" id="NP_074060.2">
    <property type="nucleotide sequence ID" value="NM_022869.2"/>
</dbReference>
<dbReference type="SMR" id="P41777"/>
<dbReference type="BioGRID" id="249215">
    <property type="interactions" value="2"/>
</dbReference>
<dbReference type="FunCoup" id="P41777">
    <property type="interactions" value="2635"/>
</dbReference>
<dbReference type="IntAct" id="P41777">
    <property type="interactions" value="2"/>
</dbReference>
<dbReference type="STRING" id="10116.ENSRNOP00000025788"/>
<dbReference type="GlyGen" id="P41777">
    <property type="glycosylation" value="1 site"/>
</dbReference>
<dbReference type="iPTMnet" id="P41777"/>
<dbReference type="PhosphoSitePlus" id="P41777"/>
<dbReference type="jPOST" id="P41777"/>
<dbReference type="PaxDb" id="10116-ENSRNOP00000025788"/>
<dbReference type="GeneID" id="64896"/>
<dbReference type="KEGG" id="rno:64896"/>
<dbReference type="AGR" id="RGD:621578"/>
<dbReference type="CTD" id="9221"/>
<dbReference type="RGD" id="621578">
    <property type="gene designation" value="Nolc1"/>
</dbReference>
<dbReference type="VEuPathDB" id="HostDB:ENSRNOG00000018704"/>
<dbReference type="eggNOG" id="KOG2992">
    <property type="taxonomic scope" value="Eukaryota"/>
</dbReference>
<dbReference type="InParanoid" id="P41777"/>
<dbReference type="OrthoDB" id="5599646at2759"/>
<dbReference type="PhylomeDB" id="P41777"/>
<dbReference type="TreeFam" id="TF341730"/>
<dbReference type="PRO" id="PR:P41777"/>
<dbReference type="Proteomes" id="UP000002494">
    <property type="component" value="Chromosome 1"/>
</dbReference>
<dbReference type="Bgee" id="ENSRNOG00000018704">
    <property type="expression patterns" value="Expressed in ovary and 20 other cell types or tissues"/>
</dbReference>
<dbReference type="GO" id="GO:0031428">
    <property type="term" value="C:box C/D methylation guide snoRNP complex"/>
    <property type="evidence" value="ECO:0000314"/>
    <property type="project" value="RGD"/>
</dbReference>
<dbReference type="GO" id="GO:0031429">
    <property type="term" value="C:box H/ACA snoRNP complex"/>
    <property type="evidence" value="ECO:0000314"/>
    <property type="project" value="RGD"/>
</dbReference>
<dbReference type="GO" id="GO:0015030">
    <property type="term" value="C:Cajal body"/>
    <property type="evidence" value="ECO:0000266"/>
    <property type="project" value="RGD"/>
</dbReference>
<dbReference type="GO" id="GO:0005737">
    <property type="term" value="C:cytoplasm"/>
    <property type="evidence" value="ECO:0007669"/>
    <property type="project" value="UniProtKB-SubCell"/>
</dbReference>
<dbReference type="GO" id="GO:0005730">
    <property type="term" value="C:nucleolus"/>
    <property type="evidence" value="ECO:0000314"/>
    <property type="project" value="UniProtKB"/>
</dbReference>
<dbReference type="GO" id="GO:0005654">
    <property type="term" value="C:nucleoplasm"/>
    <property type="evidence" value="ECO:0000314"/>
    <property type="project" value="RGD"/>
</dbReference>
<dbReference type="GO" id="GO:0005524">
    <property type="term" value="F:ATP binding"/>
    <property type="evidence" value="ECO:0007669"/>
    <property type="project" value="UniProtKB-KW"/>
</dbReference>
<dbReference type="GO" id="GO:0062064">
    <property type="term" value="F:box C/D methylation guide snoRNP complex binding"/>
    <property type="evidence" value="ECO:0000314"/>
    <property type="project" value="UniProtKB"/>
</dbReference>
<dbReference type="GO" id="GO:0034512">
    <property type="term" value="F:box C/D sno(s)RNA binding"/>
    <property type="evidence" value="ECO:0000314"/>
    <property type="project" value="RGD"/>
</dbReference>
<dbReference type="GO" id="GO:0034513">
    <property type="term" value="F:box H/ACA snoRNA binding"/>
    <property type="evidence" value="ECO:0000314"/>
    <property type="project" value="RGD"/>
</dbReference>
<dbReference type="GO" id="GO:0062065">
    <property type="term" value="F:box H/ACA snoRNP complex binding"/>
    <property type="evidence" value="ECO:0000314"/>
    <property type="project" value="UniProtKB"/>
</dbReference>
<dbReference type="GO" id="GO:0005525">
    <property type="term" value="F:GTP binding"/>
    <property type="evidence" value="ECO:0007669"/>
    <property type="project" value="UniProtKB-KW"/>
</dbReference>
<dbReference type="GO" id="GO:0140678">
    <property type="term" value="F:molecular function inhibitor activity"/>
    <property type="evidence" value="ECO:0000266"/>
    <property type="project" value="RGD"/>
</dbReference>
<dbReference type="GO" id="GO:0008139">
    <property type="term" value="F:nuclear localization sequence binding"/>
    <property type="evidence" value="ECO:0000314"/>
    <property type="project" value="RGD"/>
</dbReference>
<dbReference type="GO" id="GO:0019904">
    <property type="term" value="F:protein domain specific binding"/>
    <property type="evidence" value="ECO:0000353"/>
    <property type="project" value="RGD"/>
</dbReference>
<dbReference type="GO" id="GO:0046982">
    <property type="term" value="F:protein heterodimerization activity"/>
    <property type="evidence" value="ECO:0000266"/>
    <property type="project" value="RGD"/>
</dbReference>
<dbReference type="GO" id="GO:0030674">
    <property type="term" value="F:protein-macromolecule adaptor activity"/>
    <property type="evidence" value="ECO:0000266"/>
    <property type="project" value="RGD"/>
</dbReference>
<dbReference type="GO" id="GO:0001093">
    <property type="term" value="F:TFIIB-class transcription factor binding"/>
    <property type="evidence" value="ECO:0000314"/>
    <property type="project" value="RGD"/>
</dbReference>
<dbReference type="GO" id="GO:0007409">
    <property type="term" value="P:axonogenesis"/>
    <property type="evidence" value="ECO:0000266"/>
    <property type="project" value="RGD"/>
</dbReference>
<dbReference type="GO" id="GO:0033979">
    <property type="term" value="P:box H/ACA sno(s)RNA metabolic process"/>
    <property type="evidence" value="ECO:0000316"/>
    <property type="project" value="RGD"/>
</dbReference>
<dbReference type="GO" id="GO:0014032">
    <property type="term" value="P:neural crest cell development"/>
    <property type="evidence" value="ECO:0000250"/>
    <property type="project" value="UniProtKB"/>
</dbReference>
<dbReference type="GO" id="GO:0014029">
    <property type="term" value="P:neural crest formation"/>
    <property type="evidence" value="ECO:0000250"/>
    <property type="project" value="UniProtKB"/>
</dbReference>
<dbReference type="GO" id="GO:0007000">
    <property type="term" value="P:nucleolus organization"/>
    <property type="evidence" value="ECO:0000266"/>
    <property type="project" value="RGD"/>
</dbReference>
<dbReference type="GO" id="GO:0008284">
    <property type="term" value="P:positive regulation of cell population proliferation"/>
    <property type="evidence" value="ECO:0000316"/>
    <property type="project" value="RGD"/>
</dbReference>
<dbReference type="GO" id="GO:0045893">
    <property type="term" value="P:positive regulation of DNA-templated transcription"/>
    <property type="evidence" value="ECO:0000314"/>
    <property type="project" value="RGD"/>
</dbReference>
<dbReference type="GO" id="GO:0042306">
    <property type="term" value="P:regulation of protein import into nucleus"/>
    <property type="evidence" value="ECO:0000314"/>
    <property type="project" value="RGD"/>
</dbReference>
<dbReference type="GO" id="GO:0048167">
    <property type="term" value="P:regulation of synaptic plasticity"/>
    <property type="evidence" value="ECO:0000266"/>
    <property type="project" value="RGD"/>
</dbReference>
<dbReference type="GO" id="GO:0006417">
    <property type="term" value="P:regulation of translation"/>
    <property type="evidence" value="ECO:0000250"/>
    <property type="project" value="UniProtKB"/>
</dbReference>
<dbReference type="InterPro" id="IPR006594">
    <property type="entry name" value="LisH"/>
</dbReference>
<dbReference type="InterPro" id="IPR039191">
    <property type="entry name" value="Nopp140-like"/>
</dbReference>
<dbReference type="InterPro" id="IPR007718">
    <property type="entry name" value="Srp40_C"/>
</dbReference>
<dbReference type="PANTHER" id="PTHR23216">
    <property type="entry name" value="NUCLEOLAR AND COILED-BODY PHOSPHOPROTEIN 1"/>
    <property type="match status" value="1"/>
</dbReference>
<dbReference type="PANTHER" id="PTHR23216:SF1">
    <property type="entry name" value="NUCLEOLAR AND COILED-BODY PHOSPHOPROTEIN 1"/>
    <property type="match status" value="1"/>
</dbReference>
<dbReference type="Pfam" id="PF05022">
    <property type="entry name" value="SRP40_C"/>
    <property type="match status" value="1"/>
</dbReference>
<dbReference type="PROSITE" id="PS50896">
    <property type="entry name" value="LISH"/>
    <property type="match status" value="1"/>
</dbReference>
<sequence>MADTGLRRVVPSDLYPLVLGFLRDNQLSEVASKFAKATGATQQDANASSLLDIYSFWLKSTKAPKVKLQSNGPVAKKAKKETSSSDSSEDSSEEEDKAQVPTQKAAAPAKRASLPQHAGKAAAKASESSSSEESSEEEEEEDKKKKPVQQKAVKPQAKAVRPPPKKAESSESESDSSSEDEAPQTQKPKAAATAAKAPTKAQTKAPAKPGPPAKAQPKAANGKAGSSSSSSSSSSSDDSEEEKKAAAPLKKTAPKKQVVAKAPVKVTAAPTQKSSSSEDSSSEEEEEQKKPMKKKAGPYSSVPPPSVSLSKKSVGAQSPKKAAAQTQPADSSADSSEESDSSSEEEKKTPAKTVVSKTPAKPAPVKKKAESSSDSSDSDSSEDEAPAKPVSATKSPLSKPAVTPKPPAAKAVATPKQPAGSGQKPQSRKADSSSSEEESSSSEEEATKKSVTTPKARVTAKAAPSLPAKQAPRAGGDSSSDSESSSSEEEKKTPPKPPAKKKAAGAAVPKPTPVKKAAAESSSSSSSSEDSSEEEKKKPKSKATPKPQAGKANGVPASQNGKAGKESEEEEEDTEQNKKAAGTKPGSGKKRKHNETADEAATPQSKKVKLQTPNTFPKRKKGEKRASSPFRRVREEEIEVDSRVADNSFDAKRGAAGDWGERANQVLKFTKGKSFRHEKTKKKRGSYRGGSISVQVNSVKFDSE</sequence>
<comment type="function">
    <text evidence="2">Nucleolar protein that acts as a regulator of RNA polymerase I by connecting RNA polymerase I with enzymes responsible for ribosomal processing and modification. Required for neural crest specification: following monoubiquitination by the BCR(KBTBD8) complex, associates with TCOF1 and acts as a platform to connect RNA polymerase I with enzymes responsible for ribosomal processing and modification, leading to remodel the translational program of differentiating cells in favor of neural crest specification. Involved in nucleologenesis, possibly by playing a role in the maintenance of the fundamental structure of the fibrillar center and dense fibrillar component in the nucleolus. It has intrinsic GTPase and ATPase activities.</text>
</comment>
<comment type="subunit">
    <text evidence="2 5">Interacts with RNA polymerase I 194 kDa subunit (RPA194) and with casein kinase-II (By similarity). Interacts with DKC1/NAP57, NOP58 and fibrillarin (PubMed:10679015).</text>
</comment>
<comment type="subcellular location">
    <subcellularLocation>
        <location evidence="6">Cytoplasm</location>
    </subcellularLocation>
    <subcellularLocation>
        <location evidence="6">Nucleus</location>
        <location evidence="6">Nucleolus</location>
    </subcellularLocation>
    <text evidence="6">Shuttles on curvilinear tracks between nucleolus and cytoplasm. These tracks extend from the dense fibrillar component of the nucleolus across the nucleoplasm to a limited number of nuclear pore complexes.</text>
</comment>
<comment type="PTM">
    <text evidence="6">Undergoes rapid and massive phosphorylation/dephosphorylation cycles on CK2 and PKC sites. NOLC1 is one of the mostly phosphorylated proteins in the cell.</text>
</comment>
<comment type="PTM">
    <text evidence="2">Ubiquitinated. Monoubiquitination by the BCR(KBTBD8) complex promotes the formation of a NOLC1-TCOF1 complex that acts as a platform to connect RNA polymerase I with enzymes responsible for ribosomal processing and modification, leading to remodel the translational program of differentiating cells in favor of neural crest specification.</text>
</comment>
<comment type="PTM">
    <text evidence="1">Pyrophosphorylated by 5-diphosphoinositol pentakisphosphate (5-IP7). Serine pyrophosphorylation is achieved by Mg(2+)-dependent, but enzyme independent transfer of a beta-phosphate from a inositol pyrophosphate to a pre-phosphorylated serine residue.</text>
</comment>
<comment type="similarity">
    <text evidence="8">Belongs to the NOLC1 family.</text>
</comment>
<accession>P41777</accession>
<accession>F1LPS3</accession>
<keyword id="KW-0007">Acetylation</keyword>
<keyword id="KW-0067">ATP-binding</keyword>
<keyword id="KW-0963">Cytoplasm</keyword>
<keyword id="KW-0903">Direct protein sequencing</keyword>
<keyword id="KW-0342">GTP-binding</keyword>
<keyword id="KW-1017">Isopeptide bond</keyword>
<keyword id="KW-0488">Methylation</keyword>
<keyword id="KW-0547">Nucleotide-binding</keyword>
<keyword id="KW-0539">Nucleus</keyword>
<keyword id="KW-0597">Phosphoprotein</keyword>
<keyword id="KW-1185">Reference proteome</keyword>
<keyword id="KW-0677">Repeat</keyword>
<keyword id="KW-0832">Ubl conjugation</keyword>
<protein>
    <recommendedName>
        <fullName evidence="8">Nucleolar and coiled-body phosphoprotein 1</fullName>
    </recommendedName>
    <alternativeName>
        <fullName evidence="7">140 kDa nucleolar phosphoprotein</fullName>
        <shortName evidence="7">Nopp140</shortName>
    </alternativeName>
    <alternativeName>
        <fullName>Nucleolar 130 kDa protein</fullName>
    </alternativeName>
    <alternativeName>
        <fullName>Nucleolar phosphoprotein p130</fullName>
    </alternativeName>
</protein>
<feature type="chain" id="PRO_0000096943" description="Nucleolar and coiled-body phosphoprotein 1">
    <location>
        <begin position="1"/>
        <end position="704"/>
    </location>
</feature>
<feature type="domain" description="LisH" evidence="3">
    <location>
        <begin position="10"/>
        <end position="42"/>
    </location>
</feature>
<feature type="repeat" description="Acidic serine cluster 1">
    <location>
        <begin position="84"/>
        <end position="95"/>
    </location>
</feature>
<feature type="repeat" description="Acidic serine cluster 2">
    <location>
        <begin position="127"/>
        <end position="138"/>
    </location>
</feature>
<feature type="repeat" description="Acidic serine cluster 3">
    <location>
        <begin position="170"/>
        <end position="181"/>
    </location>
</feature>
<feature type="repeat" description="Acidic serine cluster 4">
    <location>
        <begin position="231"/>
        <end position="242"/>
    </location>
</feature>
<feature type="repeat" description="Acidic serine cluster 5">
    <location>
        <begin position="274"/>
        <end position="285"/>
    </location>
</feature>
<feature type="repeat" description="Acidic serine cluster 6">
    <location>
        <begin position="335"/>
        <end position="346"/>
    </location>
</feature>
<feature type="repeat" description="Acidic serine cluster 7">
    <location>
        <begin position="373"/>
        <end position="384"/>
    </location>
</feature>
<feature type="repeat" description="Acidic serine cluster 8">
    <location>
        <begin position="434"/>
        <end position="445"/>
    </location>
</feature>
<feature type="repeat" description="Acidic serine cluster 9">
    <location>
        <begin position="479"/>
        <end position="490"/>
    </location>
</feature>
<feature type="repeat" description="Acidic serine cluster 10">
    <location>
        <begin position="524"/>
        <end position="535"/>
    </location>
</feature>
<feature type="repeat" description="Acidic serine cluster 11">
    <location>
        <begin position="559"/>
        <end position="570"/>
    </location>
</feature>
<feature type="region of interest" description="Disordered" evidence="4">
    <location>
        <begin position="65"/>
        <end position="638"/>
    </location>
</feature>
<feature type="region of interest" description="11 X 12 AA approximate repeats of an acidic serine cluster">
    <location>
        <begin position="84"/>
        <end position="570"/>
    </location>
</feature>
<feature type="compositionally biased region" description="Acidic residues" evidence="4">
    <location>
        <begin position="87"/>
        <end position="96"/>
    </location>
</feature>
<feature type="compositionally biased region" description="Low complexity" evidence="4">
    <location>
        <begin position="120"/>
        <end position="132"/>
    </location>
</feature>
<feature type="compositionally biased region" description="Low complexity" evidence="4">
    <location>
        <begin position="149"/>
        <end position="160"/>
    </location>
</feature>
<feature type="compositionally biased region" description="Acidic residues" evidence="4">
    <location>
        <begin position="170"/>
        <end position="182"/>
    </location>
</feature>
<feature type="compositionally biased region" description="Low complexity" evidence="4">
    <location>
        <begin position="183"/>
        <end position="207"/>
    </location>
</feature>
<feature type="compositionally biased region" description="Low complexity" evidence="4">
    <location>
        <begin position="215"/>
        <end position="236"/>
    </location>
</feature>
<feature type="compositionally biased region" description="Low complexity" evidence="4">
    <location>
        <begin position="246"/>
        <end position="279"/>
    </location>
</feature>
<feature type="compositionally biased region" description="Low complexity" evidence="4">
    <location>
        <begin position="408"/>
        <end position="419"/>
    </location>
</feature>
<feature type="compositionally biased region" description="Acidic residues" evidence="4">
    <location>
        <begin position="434"/>
        <end position="444"/>
    </location>
</feature>
<feature type="compositionally biased region" description="Low complexity" evidence="4">
    <location>
        <begin position="474"/>
        <end position="485"/>
    </location>
</feature>
<feature type="compositionally biased region" description="Low complexity" evidence="4">
    <location>
        <begin position="504"/>
        <end position="529"/>
    </location>
</feature>
<feature type="modified residue" description="N6-acetyllysine" evidence="2">
    <location>
        <position position="33"/>
    </location>
</feature>
<feature type="modified residue" description="Phosphoserine" evidence="2">
    <location>
        <position position="87"/>
    </location>
</feature>
<feature type="modified residue" description="Diphosphoserine" evidence="1">
    <location>
        <position position="88"/>
    </location>
</feature>
<feature type="modified residue" description="Phosphoserine" evidence="1">
    <location>
        <position position="88"/>
    </location>
</feature>
<feature type="modified residue" description="Diphosphoserine" evidence="1">
    <location>
        <position position="91"/>
    </location>
</feature>
<feature type="modified residue" description="Phosphoserine" evidence="2">
    <location>
        <position position="91"/>
    </location>
</feature>
<feature type="modified residue" description="Phosphoserine" evidence="2">
    <location>
        <position position="92"/>
    </location>
</feature>
<feature type="modified residue" description="Phosphoserine" evidence="2">
    <location>
        <position position="372"/>
    </location>
</feature>
<feature type="modified residue" description="Phosphoserine" evidence="2">
    <location>
        <position position="373"/>
    </location>
</feature>
<feature type="modified residue" description="Phosphoserine" evidence="2">
    <location>
        <position position="376"/>
    </location>
</feature>
<feature type="modified residue" description="N6-acetyllysine; alternate" evidence="2">
    <location>
        <position position="424"/>
    </location>
</feature>
<feature type="modified residue" description="Phosphoserine" evidence="2">
    <location>
        <position position="465"/>
    </location>
</feature>
<feature type="modified residue" description="Phosphoserine" evidence="10">
    <location>
        <position position="567"/>
    </location>
</feature>
<feature type="modified residue" description="Phosphoserine" evidence="2">
    <location>
        <position position="587"/>
    </location>
</feature>
<feature type="modified residue" description="Phosphothreonine" evidence="1">
    <location>
        <position position="596"/>
    </location>
</feature>
<feature type="modified residue" description="Phosphothreonine" evidence="2">
    <location>
        <position position="612"/>
    </location>
</feature>
<feature type="modified residue" description="Phosphothreonine" evidence="2">
    <location>
        <position position="615"/>
    </location>
</feature>
<feature type="modified residue" description="Phosphoserine" evidence="2">
    <location>
        <position position="627"/>
    </location>
</feature>
<feature type="modified residue" description="Phosphoserine" evidence="2">
    <location>
        <position position="648"/>
    </location>
</feature>
<feature type="modified residue" description="N6-acetyllysine; alternate" evidence="2">
    <location>
        <position position="668"/>
    </location>
</feature>
<feature type="modified residue" description="Omega-N-methylarginine" evidence="2">
    <location>
        <position position="688"/>
    </location>
</feature>
<feature type="modified residue" description="Phosphoserine" evidence="2">
    <location>
        <position position="691"/>
    </location>
</feature>
<feature type="modified residue" description="Phosphoserine" evidence="10">
    <location>
        <position position="703"/>
    </location>
</feature>
<feature type="cross-link" description="Glycyl lysine isopeptide (Lys-Gly) (interchain with G-Cter in SUMO2)" evidence="2">
    <location>
        <position position="67"/>
    </location>
</feature>
<feature type="cross-link" description="Glycyl lysine isopeptide (Lys-Gly) (interchain with G-Cter in SUMO2)" evidence="2">
    <location>
        <position position="76"/>
    </location>
</feature>
<feature type="cross-link" description="Glycyl lysine isopeptide (Lys-Gly) (interchain with G-Cter in SUMO2)" evidence="2">
    <location>
        <position position="189"/>
    </location>
</feature>
<feature type="cross-link" description="Glycyl lysine isopeptide (Lys-Gly) (interchain with G-Cter in SUMO2)" evidence="2">
    <location>
        <position position="200"/>
    </location>
</feature>
<feature type="cross-link" description="Glycyl lysine isopeptide (Lys-Gly) (interchain with G-Cter in SUMO2)" evidence="2">
    <location>
        <position position="352"/>
    </location>
</feature>
<feature type="cross-link" description="Glycyl lysine isopeptide (Lys-Gly) (interchain with G-Cter in SUMO2)" evidence="2">
    <location>
        <position position="357"/>
    </location>
</feature>
<feature type="cross-link" description="Glycyl lysine isopeptide (Lys-Gly) (interchain with G-Cter in SUMO2)" evidence="2">
    <location>
        <position position="399"/>
    </location>
</feature>
<feature type="cross-link" description="Glycyl lysine isopeptide (Lys-Gly) (interchain with G-Cter in SUMO2)" evidence="2">
    <location>
        <position position="405"/>
    </location>
</feature>
<feature type="cross-link" description="Glycyl lysine isopeptide (Lys-Gly) (interchain with G-Cter in SUMO2)" evidence="2">
    <location>
        <position position="410"/>
    </location>
</feature>
<feature type="cross-link" description="Glycyl lysine isopeptide (Lys-Gly) (interchain with G-Cter in SUMO2)" evidence="2">
    <location>
        <position position="416"/>
    </location>
</feature>
<feature type="cross-link" description="Glycyl lysine isopeptide (Lys-Gly) (interchain with G-Cter in SUMO1); alternate" evidence="2">
    <location>
        <position position="424"/>
    </location>
</feature>
<feature type="cross-link" description="Glycyl lysine isopeptide (Lys-Gly) (interchain with G-Cter in SUMO2); alternate" evidence="2">
    <location>
        <position position="424"/>
    </location>
</feature>
<feature type="cross-link" description="Glycyl lysine isopeptide (Lys-Gly) (interchain with G-Cter in SUMO2)" evidence="2">
    <location>
        <position position="449"/>
    </location>
</feature>
<feature type="cross-link" description="Glycyl lysine isopeptide (Lys-Gly) (interchain with G-Cter in SUMO2)" evidence="2">
    <location>
        <position position="461"/>
    </location>
</feature>
<feature type="cross-link" description="Glycyl lysine isopeptide (Lys-Gly) (interchain with G-Cter in SUMO2)" evidence="2">
    <location>
        <position position="510"/>
    </location>
</feature>
<feature type="cross-link" description="Glycyl lysine isopeptide (Lys-Gly) (interchain with G-Cter in SUMO2)" evidence="2">
    <location>
        <position position="584"/>
    </location>
</feature>
<feature type="cross-link" description="Glycyl lysine isopeptide (Lys-Gly) (interchain with G-Cter in SUMO2)" evidence="2">
    <location>
        <position position="609"/>
    </location>
</feature>
<feature type="cross-link" description="Glycyl lysine isopeptide (Lys-Gly) (interchain with G-Cter in SUMO2)" evidence="2">
    <location>
        <position position="618"/>
    </location>
</feature>
<feature type="cross-link" description="Glycyl lysine isopeptide (Lys-Gly) (interchain with G-Cter in SUMO2)" evidence="2">
    <location>
        <position position="652"/>
    </location>
</feature>
<feature type="cross-link" description="Glycyl lysine isopeptide (Lys-Gly) (interchain with G-Cter in SUMO2); alternate" evidence="2">
    <location>
        <position position="668"/>
    </location>
</feature>
<feature type="cross-link" description="Glycyl lysine isopeptide (Lys-Gly) (interchain with G-Cter in SUMO2)" evidence="2">
    <location>
        <position position="700"/>
    </location>
</feature>
<feature type="sequence variant" description="In Nopp140b.">
    <location>
        <position position="150"/>
    </location>
</feature>
<feature type="sequence conflict" description="In Ref. 1; AAA41718/AAA41719." ref="1">
    <original>E</original>
    <variation>K</variation>
    <location>
        <position position="141"/>
    </location>
</feature>
<evidence type="ECO:0000250" key="1">
    <source>
        <dbReference type="UniProtKB" id="E9Q5C9"/>
    </source>
</evidence>
<evidence type="ECO:0000250" key="2">
    <source>
        <dbReference type="UniProtKB" id="Q14978"/>
    </source>
</evidence>
<evidence type="ECO:0000255" key="3">
    <source>
        <dbReference type="PROSITE-ProRule" id="PRU00126"/>
    </source>
</evidence>
<evidence type="ECO:0000256" key="4">
    <source>
        <dbReference type="SAM" id="MobiDB-lite"/>
    </source>
</evidence>
<evidence type="ECO:0000269" key="5">
    <source>
    </source>
</evidence>
<evidence type="ECO:0000269" key="6">
    <source>
    </source>
</evidence>
<evidence type="ECO:0000303" key="7">
    <source>
    </source>
</evidence>
<evidence type="ECO:0000305" key="8"/>
<evidence type="ECO:0000312" key="9">
    <source>
        <dbReference type="RGD" id="621578"/>
    </source>
</evidence>
<evidence type="ECO:0007744" key="10">
    <source>
    </source>
</evidence>
<organism>
    <name type="scientific">Rattus norvegicus</name>
    <name type="common">Rat</name>
    <dbReference type="NCBI Taxonomy" id="10116"/>
    <lineage>
        <taxon>Eukaryota</taxon>
        <taxon>Metazoa</taxon>
        <taxon>Chordata</taxon>
        <taxon>Craniata</taxon>
        <taxon>Vertebrata</taxon>
        <taxon>Euteleostomi</taxon>
        <taxon>Mammalia</taxon>
        <taxon>Eutheria</taxon>
        <taxon>Euarchontoglires</taxon>
        <taxon>Glires</taxon>
        <taxon>Rodentia</taxon>
        <taxon>Myomorpha</taxon>
        <taxon>Muroidea</taxon>
        <taxon>Muridae</taxon>
        <taxon>Murinae</taxon>
        <taxon>Rattus</taxon>
    </lineage>
</organism>
<gene>
    <name evidence="9" type="primary">Nolc1</name>
</gene>
<proteinExistence type="evidence at protein level"/>